<protein>
    <recommendedName>
        <fullName>Accessory gland protein Acp63F</fullName>
    </recommendedName>
</protein>
<feature type="signal peptide" evidence="1">
    <location>
        <begin position="1"/>
        <end position="16"/>
    </location>
</feature>
<feature type="chain" id="PRO_0000020585" description="Accessory gland protein Acp63F">
    <location>
        <begin position="17"/>
        <end position="81"/>
    </location>
</feature>
<feature type="sequence variant" description="In strain: SFS 3.4.">
    <original>N</original>
    <variation>S</variation>
    <location>
        <position position="39"/>
    </location>
</feature>
<feature type="sequence variant" description="In strain: Canton-S, NFS 5.1, NFS 5.2, NFS 5.3, NFS 5.4, NFS 6.1, NFS 6.2, NFS 6.3, NFS 6.4, NFS 7.8, SFS 1.1, SFS 1.2, SFS 1.3, SFS 1.4, SFS 2.2, SFS 2.3, SFS 2.4, SFS 3.1, SFS 3.2, SFS 3.3, SFS 3.4, Zim63H-12C, Zim63H-16C, Zim63H-28C, Zim63H-34C, Zim63I-10C, Zim63I-18C, Zim63I-53C and Zim63I-7C.">
    <original>K</original>
    <variation>N</variation>
    <location>
        <position position="49"/>
    </location>
</feature>
<feature type="sequence variant" description="In strain: Zim63H-16C, Zim63H-34C and Zim63I-7C.">
    <original>L</original>
    <variation>V</variation>
    <location>
        <position position="72"/>
    </location>
</feature>
<feature type="sequence variant" description="In strain: Zim63H-30C.">
    <original>HG</original>
    <variation>MA</variation>
    <location>
        <begin position="73"/>
        <end position="74"/>
    </location>
</feature>
<feature type="sequence variant" description="In strain: Zim63H-16C and Zim63H-34C.">
    <original>H</original>
    <variation>Q</variation>
    <location>
        <position position="73"/>
    </location>
</feature>
<feature type="sequence variant" description="In strain: Zim63H-16C.">
    <original>K</original>
    <variation>E</variation>
    <location>
        <position position="75"/>
    </location>
</feature>
<feature type="sequence variant" description="In strain: Zim63I-7C.">
    <original>P</original>
    <variation>T</variation>
    <location>
        <position position="76"/>
    </location>
</feature>
<name>A63F_DROME</name>
<dbReference type="EMBL" id="U85761">
    <property type="protein sequence ID" value="AAB96385.1"/>
    <property type="molecule type" value="mRNA"/>
</dbReference>
<dbReference type="EMBL" id="AY010618">
    <property type="protein sequence ID" value="AAG37390.1"/>
    <property type="molecule type" value="Genomic_DNA"/>
</dbReference>
<dbReference type="EMBL" id="AY010619">
    <property type="protein sequence ID" value="AAG37391.1"/>
    <property type="molecule type" value="Genomic_DNA"/>
</dbReference>
<dbReference type="EMBL" id="AY010620">
    <property type="protein sequence ID" value="AAG37392.1"/>
    <property type="molecule type" value="Genomic_DNA"/>
</dbReference>
<dbReference type="EMBL" id="AY010621">
    <property type="protein sequence ID" value="AAG37393.1"/>
    <property type="molecule type" value="Genomic_DNA"/>
</dbReference>
<dbReference type="EMBL" id="AY010622">
    <property type="protein sequence ID" value="AAG37394.1"/>
    <property type="molecule type" value="Genomic_DNA"/>
</dbReference>
<dbReference type="EMBL" id="AY010623">
    <property type="protein sequence ID" value="AAG37395.1"/>
    <property type="molecule type" value="Genomic_DNA"/>
</dbReference>
<dbReference type="EMBL" id="AY010624">
    <property type="protein sequence ID" value="AAG37396.1"/>
    <property type="molecule type" value="Genomic_DNA"/>
</dbReference>
<dbReference type="EMBL" id="AY010625">
    <property type="protein sequence ID" value="AAG37397.1"/>
    <property type="molecule type" value="Genomic_DNA"/>
</dbReference>
<dbReference type="EMBL" id="AY010626">
    <property type="protein sequence ID" value="AAG37398.1"/>
    <property type="molecule type" value="Genomic_DNA"/>
</dbReference>
<dbReference type="EMBL" id="AY344345">
    <property type="protein sequence ID" value="AAR05064.1"/>
    <property type="molecule type" value="Genomic_DNA"/>
</dbReference>
<dbReference type="EMBL" id="AY344346">
    <property type="protein sequence ID" value="AAR05065.1"/>
    <property type="molecule type" value="Genomic_DNA"/>
</dbReference>
<dbReference type="EMBL" id="AY344347">
    <property type="protein sequence ID" value="AAR05066.1"/>
    <property type="molecule type" value="Genomic_DNA"/>
</dbReference>
<dbReference type="EMBL" id="AY344348">
    <property type="protein sequence ID" value="AAR05067.1"/>
    <property type="molecule type" value="Genomic_DNA"/>
</dbReference>
<dbReference type="EMBL" id="AY344349">
    <property type="protein sequence ID" value="AAR05068.1"/>
    <property type="molecule type" value="Genomic_DNA"/>
</dbReference>
<dbReference type="EMBL" id="AY344350">
    <property type="protein sequence ID" value="AAR05069.1"/>
    <property type="molecule type" value="Genomic_DNA"/>
</dbReference>
<dbReference type="EMBL" id="AY344351">
    <property type="protein sequence ID" value="AAR05070.1"/>
    <property type="molecule type" value="Genomic_DNA"/>
</dbReference>
<dbReference type="EMBL" id="AY344352">
    <property type="protein sequence ID" value="AAR05071.1"/>
    <property type="molecule type" value="Genomic_DNA"/>
</dbReference>
<dbReference type="EMBL" id="AY344353">
    <property type="protein sequence ID" value="AAR05072.1"/>
    <property type="molecule type" value="Genomic_DNA"/>
</dbReference>
<dbReference type="EMBL" id="AY344354">
    <property type="protein sequence ID" value="AAR05073.1"/>
    <property type="molecule type" value="Genomic_DNA"/>
</dbReference>
<dbReference type="EMBL" id="AY344355">
    <property type="protein sequence ID" value="AAR05074.1"/>
    <property type="molecule type" value="Genomic_DNA"/>
</dbReference>
<dbReference type="EMBL" id="AY344356">
    <property type="protein sequence ID" value="AAR05075.1"/>
    <property type="molecule type" value="Genomic_DNA"/>
</dbReference>
<dbReference type="EMBL" id="AY344357">
    <property type="protein sequence ID" value="AAR05076.1"/>
    <property type="molecule type" value="Genomic_DNA"/>
</dbReference>
<dbReference type="EMBL" id="AY344358">
    <property type="protein sequence ID" value="AAR05077.1"/>
    <property type="molecule type" value="Genomic_DNA"/>
</dbReference>
<dbReference type="EMBL" id="AY344359">
    <property type="protein sequence ID" value="AAR05078.1"/>
    <property type="molecule type" value="Genomic_DNA"/>
</dbReference>
<dbReference type="EMBL" id="AY344360">
    <property type="protein sequence ID" value="AAR05079.1"/>
    <property type="molecule type" value="Genomic_DNA"/>
</dbReference>
<dbReference type="EMBL" id="AY344361">
    <property type="protein sequence ID" value="AAR05080.1"/>
    <property type="molecule type" value="Genomic_DNA"/>
</dbReference>
<dbReference type="EMBL" id="AY344362">
    <property type="protein sequence ID" value="AAR05081.1"/>
    <property type="molecule type" value="Genomic_DNA"/>
</dbReference>
<dbReference type="EMBL" id="AY344363">
    <property type="protein sequence ID" value="AAR05082.1"/>
    <property type="molecule type" value="Genomic_DNA"/>
</dbReference>
<dbReference type="EMBL" id="AY344364">
    <property type="protein sequence ID" value="AAR05083.1"/>
    <property type="molecule type" value="Genomic_DNA"/>
</dbReference>
<dbReference type="EMBL" id="AE014296">
    <property type="protein sequence ID" value="AAF47797.2"/>
    <property type="molecule type" value="Genomic_DNA"/>
</dbReference>
<dbReference type="EMBL" id="BT053707">
    <property type="protein sequence ID" value="ACK77625.1"/>
    <property type="molecule type" value="mRNA"/>
</dbReference>
<dbReference type="RefSeq" id="NP_001303386.1">
    <property type="nucleotide sequence ID" value="NM_001316457.1"/>
</dbReference>
<dbReference type="RefSeq" id="NP_523906.2">
    <property type="nucleotide sequence ID" value="NM_079182.3"/>
</dbReference>
<dbReference type="BioGRID" id="63938">
    <property type="interactions" value="3"/>
</dbReference>
<dbReference type="FunCoup" id="O46200">
    <property type="interactions" value="31"/>
</dbReference>
<dbReference type="STRING" id="7227.FBpp0073038"/>
<dbReference type="PaxDb" id="7227-FBpp0073038"/>
<dbReference type="DNASU" id="38448"/>
<dbReference type="EnsemblMetazoa" id="FBtr0073182">
    <property type="protein sequence ID" value="FBpp0073038"/>
    <property type="gene ID" value="FBgn0015585"/>
</dbReference>
<dbReference type="EnsemblMetazoa" id="FBtr0346805">
    <property type="protein sequence ID" value="FBpp0312380"/>
    <property type="gene ID" value="FBgn0015585"/>
</dbReference>
<dbReference type="GeneID" id="38448"/>
<dbReference type="KEGG" id="dme:Dmel_CG10852"/>
<dbReference type="AGR" id="FB:FBgn0015585"/>
<dbReference type="CTD" id="38448"/>
<dbReference type="FlyBase" id="FBgn0015585">
    <property type="gene designation" value="Acp63F"/>
</dbReference>
<dbReference type="VEuPathDB" id="VectorBase:FBgn0015585"/>
<dbReference type="HOGENOM" id="CLU_2576336_0_0_1"/>
<dbReference type="InParanoid" id="O46200"/>
<dbReference type="OMA" id="CNFDGPN"/>
<dbReference type="OrthoDB" id="10310858at2759"/>
<dbReference type="PhylomeDB" id="O46200"/>
<dbReference type="BioGRID-ORCS" id="38448">
    <property type="hits" value="0 hits in 1 CRISPR screen"/>
</dbReference>
<dbReference type="GenomeRNAi" id="38448"/>
<dbReference type="PRO" id="PR:O46200"/>
<dbReference type="Proteomes" id="UP000000803">
    <property type="component" value="Chromosome 3L"/>
</dbReference>
<dbReference type="Bgee" id="FBgn0015585">
    <property type="expression patterns" value="Expressed in spermatid in male reproductive gland and 39 other cell types or tissues"/>
</dbReference>
<dbReference type="ExpressionAtlas" id="O46200">
    <property type="expression patterns" value="baseline and differential"/>
</dbReference>
<dbReference type="GO" id="GO:0005615">
    <property type="term" value="C:extracellular space"/>
    <property type="evidence" value="ECO:0007005"/>
    <property type="project" value="FlyBase"/>
</dbReference>
<dbReference type="GO" id="GO:0019953">
    <property type="term" value="P:sexual reproduction"/>
    <property type="evidence" value="ECO:0007007"/>
    <property type="project" value="FlyBase"/>
</dbReference>
<evidence type="ECO:0000255" key="1"/>
<evidence type="ECO:0000269" key="2">
    <source>
    </source>
</evidence>
<evidence type="ECO:0000305" key="3"/>
<gene>
    <name type="primary">Acp63F</name>
    <name type="ORF">CG10852</name>
</gene>
<proteinExistence type="evidence at transcript level"/>
<organism>
    <name type="scientific">Drosophila melanogaster</name>
    <name type="common">Fruit fly</name>
    <dbReference type="NCBI Taxonomy" id="7227"/>
    <lineage>
        <taxon>Eukaryota</taxon>
        <taxon>Metazoa</taxon>
        <taxon>Ecdysozoa</taxon>
        <taxon>Arthropoda</taxon>
        <taxon>Hexapoda</taxon>
        <taxon>Insecta</taxon>
        <taxon>Pterygota</taxon>
        <taxon>Neoptera</taxon>
        <taxon>Endopterygota</taxon>
        <taxon>Diptera</taxon>
        <taxon>Brachycera</taxon>
        <taxon>Muscomorpha</taxon>
        <taxon>Ephydroidea</taxon>
        <taxon>Drosophilidae</taxon>
        <taxon>Drosophila</taxon>
        <taxon>Sophophora</taxon>
    </lineage>
</organism>
<sequence length="81" mass="8983">MKAIIVFILFISSVHAMSKCNQAIYLNLDPHCGILPDCNLDGPNPSYLKRVSCERKENGKPGFIELIPGKCLHGKPRCSLK</sequence>
<keyword id="KW-0085">Behavior</keyword>
<keyword id="KW-1185">Reference proteome</keyword>
<keyword id="KW-0964">Secreted</keyword>
<keyword id="KW-0732">Signal</keyword>
<comment type="function">
    <text evidence="2">Responsible for physiological and behavioral changes in mated female flies.</text>
</comment>
<comment type="subcellular location">
    <subcellularLocation>
        <location evidence="3">Secreted</location>
    </subcellularLocation>
</comment>
<comment type="tissue specificity">
    <text evidence="2">Main cells of accessory gland and seminal fluid.</text>
</comment>
<reference key="1">
    <citation type="journal article" date="1997" name="Insect Biochem. Mol. Biol.">
        <title>New genes for male accessory gland proteins in Drosophila melanogaster.</title>
        <authorList>
            <person name="Wolfner M.F."/>
            <person name="Harada H.A."/>
            <person name="Bertram M.J."/>
            <person name="Stelick T.J."/>
            <person name="Kraus K.W."/>
            <person name="Kalb J.M."/>
            <person name="Lung Y.O."/>
            <person name="Neubaum D.M."/>
            <person name="Park M."/>
            <person name="Tram U.K."/>
        </authorList>
    </citation>
    <scope>NUCLEOTIDE SEQUENCE [MRNA]</scope>
    <scope>FUNCTION</scope>
    <scope>TISSUE SPECIFICITY</scope>
    <source>
        <strain>Canton-S</strain>
        <tissue>Male accessory gland</tissue>
    </source>
</reference>
<reference key="2">
    <citation type="journal article" date="2000" name="Genetics">
        <title>Molecular population genetics of male accessory gland proteins in Drosophila.</title>
        <authorList>
            <person name="Begun D.J."/>
            <person name="Whitley P."/>
            <person name="Todd B.L."/>
            <person name="Waldrip-Dail H.M."/>
            <person name="Clark A.G."/>
        </authorList>
    </citation>
    <scope>NUCLEOTIDE SEQUENCE [GENOMIC DNA]</scope>
    <source>
        <strain>Zim63H-12C</strain>
        <strain>Zim63H-16C</strain>
        <strain>Zim63H-28C</strain>
        <strain>Zim63H-30C</strain>
        <strain>Zim63H-34C</strain>
        <strain>Zim63I-10C</strain>
        <strain>Zim63I-18C</strain>
        <strain>Zim63I-53C</strain>
        <strain>Zim63I-7C</strain>
    </source>
</reference>
<reference key="3">
    <citation type="journal article" date="2003" name="Evolution">
        <title>Population genetics of accessory gland proteins and sexual behavior in Drosophila melanogaster populations from Evolution Canyon.</title>
        <authorList>
            <person name="Panhuis T.M."/>
            <person name="Swanson W.J."/>
            <person name="Nunney L."/>
        </authorList>
    </citation>
    <scope>NUCLEOTIDE SEQUENCE [GENOMIC DNA]</scope>
    <source>
        <strain>NFS 5.1</strain>
        <strain>NFS 5.2</strain>
        <strain>NFS 5.3</strain>
        <strain>NFS 5.4</strain>
        <strain>NFS 6.1</strain>
        <strain>NFS 6.2</strain>
        <strain>NFS 6.3</strain>
        <strain>NFS 6.4</strain>
        <strain>NFS 7.8</strain>
        <strain>SFS 1.1</strain>
        <strain>SFS 1.2</strain>
        <strain>SFS 1.3</strain>
        <strain>SFS 1.4</strain>
        <strain>SFS 2.2</strain>
        <strain>SFS 2.3</strain>
        <strain>SFS 2.4</strain>
        <strain>SFS 3.1</strain>
        <strain>SFS 3.2</strain>
        <strain>SFS 3.3</strain>
        <strain>SFS 3.4</strain>
    </source>
</reference>
<reference key="4">
    <citation type="journal article" date="2000" name="Science">
        <title>The genome sequence of Drosophila melanogaster.</title>
        <authorList>
            <person name="Adams M.D."/>
            <person name="Celniker S.E."/>
            <person name="Holt R.A."/>
            <person name="Evans C.A."/>
            <person name="Gocayne J.D."/>
            <person name="Amanatides P.G."/>
            <person name="Scherer S.E."/>
            <person name="Li P.W."/>
            <person name="Hoskins R.A."/>
            <person name="Galle R.F."/>
            <person name="George R.A."/>
            <person name="Lewis S.E."/>
            <person name="Richards S."/>
            <person name="Ashburner M."/>
            <person name="Henderson S.N."/>
            <person name="Sutton G.G."/>
            <person name="Wortman J.R."/>
            <person name="Yandell M.D."/>
            <person name="Zhang Q."/>
            <person name="Chen L.X."/>
            <person name="Brandon R.C."/>
            <person name="Rogers Y.-H.C."/>
            <person name="Blazej R.G."/>
            <person name="Champe M."/>
            <person name="Pfeiffer B.D."/>
            <person name="Wan K.H."/>
            <person name="Doyle C."/>
            <person name="Baxter E.G."/>
            <person name="Helt G."/>
            <person name="Nelson C.R."/>
            <person name="Miklos G.L.G."/>
            <person name="Abril J.F."/>
            <person name="Agbayani A."/>
            <person name="An H.-J."/>
            <person name="Andrews-Pfannkoch C."/>
            <person name="Baldwin D."/>
            <person name="Ballew R.M."/>
            <person name="Basu A."/>
            <person name="Baxendale J."/>
            <person name="Bayraktaroglu L."/>
            <person name="Beasley E.M."/>
            <person name="Beeson K.Y."/>
            <person name="Benos P.V."/>
            <person name="Berman B.P."/>
            <person name="Bhandari D."/>
            <person name="Bolshakov S."/>
            <person name="Borkova D."/>
            <person name="Botchan M.R."/>
            <person name="Bouck J."/>
            <person name="Brokstein P."/>
            <person name="Brottier P."/>
            <person name="Burtis K.C."/>
            <person name="Busam D.A."/>
            <person name="Butler H."/>
            <person name="Cadieu E."/>
            <person name="Center A."/>
            <person name="Chandra I."/>
            <person name="Cherry J.M."/>
            <person name="Cawley S."/>
            <person name="Dahlke C."/>
            <person name="Davenport L.B."/>
            <person name="Davies P."/>
            <person name="de Pablos B."/>
            <person name="Delcher A."/>
            <person name="Deng Z."/>
            <person name="Mays A.D."/>
            <person name="Dew I."/>
            <person name="Dietz S.M."/>
            <person name="Dodson K."/>
            <person name="Doup L.E."/>
            <person name="Downes M."/>
            <person name="Dugan-Rocha S."/>
            <person name="Dunkov B.C."/>
            <person name="Dunn P."/>
            <person name="Durbin K.J."/>
            <person name="Evangelista C.C."/>
            <person name="Ferraz C."/>
            <person name="Ferriera S."/>
            <person name="Fleischmann W."/>
            <person name="Fosler C."/>
            <person name="Gabrielian A.E."/>
            <person name="Garg N.S."/>
            <person name="Gelbart W.M."/>
            <person name="Glasser K."/>
            <person name="Glodek A."/>
            <person name="Gong F."/>
            <person name="Gorrell J.H."/>
            <person name="Gu Z."/>
            <person name="Guan P."/>
            <person name="Harris M."/>
            <person name="Harris N.L."/>
            <person name="Harvey D.A."/>
            <person name="Heiman T.J."/>
            <person name="Hernandez J.R."/>
            <person name="Houck J."/>
            <person name="Hostin D."/>
            <person name="Houston K.A."/>
            <person name="Howland T.J."/>
            <person name="Wei M.-H."/>
            <person name="Ibegwam C."/>
            <person name="Jalali M."/>
            <person name="Kalush F."/>
            <person name="Karpen G.H."/>
            <person name="Ke Z."/>
            <person name="Kennison J.A."/>
            <person name="Ketchum K.A."/>
            <person name="Kimmel B.E."/>
            <person name="Kodira C.D."/>
            <person name="Kraft C.L."/>
            <person name="Kravitz S."/>
            <person name="Kulp D."/>
            <person name="Lai Z."/>
            <person name="Lasko P."/>
            <person name="Lei Y."/>
            <person name="Levitsky A.A."/>
            <person name="Li J.H."/>
            <person name="Li Z."/>
            <person name="Liang Y."/>
            <person name="Lin X."/>
            <person name="Liu X."/>
            <person name="Mattei B."/>
            <person name="McIntosh T.C."/>
            <person name="McLeod M.P."/>
            <person name="McPherson D."/>
            <person name="Merkulov G."/>
            <person name="Milshina N.V."/>
            <person name="Mobarry C."/>
            <person name="Morris J."/>
            <person name="Moshrefi A."/>
            <person name="Mount S.M."/>
            <person name="Moy M."/>
            <person name="Murphy B."/>
            <person name="Murphy L."/>
            <person name="Muzny D.M."/>
            <person name="Nelson D.L."/>
            <person name="Nelson D.R."/>
            <person name="Nelson K.A."/>
            <person name="Nixon K."/>
            <person name="Nusskern D.R."/>
            <person name="Pacleb J.M."/>
            <person name="Palazzolo M."/>
            <person name="Pittman G.S."/>
            <person name="Pan S."/>
            <person name="Pollard J."/>
            <person name="Puri V."/>
            <person name="Reese M.G."/>
            <person name="Reinert K."/>
            <person name="Remington K."/>
            <person name="Saunders R.D.C."/>
            <person name="Scheeler F."/>
            <person name="Shen H."/>
            <person name="Shue B.C."/>
            <person name="Siden-Kiamos I."/>
            <person name="Simpson M."/>
            <person name="Skupski M.P."/>
            <person name="Smith T.J."/>
            <person name="Spier E."/>
            <person name="Spradling A.C."/>
            <person name="Stapleton M."/>
            <person name="Strong R."/>
            <person name="Sun E."/>
            <person name="Svirskas R."/>
            <person name="Tector C."/>
            <person name="Turner R."/>
            <person name="Venter E."/>
            <person name="Wang A.H."/>
            <person name="Wang X."/>
            <person name="Wang Z.-Y."/>
            <person name="Wassarman D.A."/>
            <person name="Weinstock G.M."/>
            <person name="Weissenbach J."/>
            <person name="Williams S.M."/>
            <person name="Woodage T."/>
            <person name="Worley K.C."/>
            <person name="Wu D."/>
            <person name="Yang S."/>
            <person name="Yao Q.A."/>
            <person name="Ye J."/>
            <person name="Yeh R.-F."/>
            <person name="Zaveri J.S."/>
            <person name="Zhan M."/>
            <person name="Zhang G."/>
            <person name="Zhao Q."/>
            <person name="Zheng L."/>
            <person name="Zheng X.H."/>
            <person name="Zhong F.N."/>
            <person name="Zhong W."/>
            <person name="Zhou X."/>
            <person name="Zhu S.C."/>
            <person name="Zhu X."/>
            <person name="Smith H.O."/>
            <person name="Gibbs R.A."/>
            <person name="Myers E.W."/>
            <person name="Rubin G.M."/>
            <person name="Venter J.C."/>
        </authorList>
    </citation>
    <scope>NUCLEOTIDE SEQUENCE [LARGE SCALE GENOMIC DNA]</scope>
    <source>
        <strain>Berkeley</strain>
    </source>
</reference>
<reference key="5">
    <citation type="journal article" date="2002" name="Genome Biol.">
        <title>Annotation of the Drosophila melanogaster euchromatic genome: a systematic review.</title>
        <authorList>
            <person name="Misra S."/>
            <person name="Crosby M.A."/>
            <person name="Mungall C.J."/>
            <person name="Matthews B.B."/>
            <person name="Campbell K.S."/>
            <person name="Hradecky P."/>
            <person name="Huang Y."/>
            <person name="Kaminker J.S."/>
            <person name="Millburn G.H."/>
            <person name="Prochnik S.E."/>
            <person name="Smith C.D."/>
            <person name="Tupy J.L."/>
            <person name="Whitfield E.J."/>
            <person name="Bayraktaroglu L."/>
            <person name="Berman B.P."/>
            <person name="Bettencourt B.R."/>
            <person name="Celniker S.E."/>
            <person name="de Grey A.D.N.J."/>
            <person name="Drysdale R.A."/>
            <person name="Harris N.L."/>
            <person name="Richter J."/>
            <person name="Russo S."/>
            <person name="Schroeder A.J."/>
            <person name="Shu S.Q."/>
            <person name="Stapleton M."/>
            <person name="Yamada C."/>
            <person name="Ashburner M."/>
            <person name="Gelbart W.M."/>
            <person name="Rubin G.M."/>
            <person name="Lewis S.E."/>
        </authorList>
    </citation>
    <scope>GENOME REANNOTATION</scope>
    <source>
        <strain>Berkeley</strain>
    </source>
</reference>
<reference key="6">
    <citation type="submission" date="2008-12" db="EMBL/GenBank/DDBJ databases">
        <authorList>
            <person name="Carlson J.W."/>
            <person name="Booth B."/>
            <person name="Frise E."/>
            <person name="Park S."/>
            <person name="Wan K.H."/>
            <person name="Yu C."/>
            <person name="Celniker S.E."/>
        </authorList>
    </citation>
    <scope>NUCLEOTIDE SEQUENCE [LARGE SCALE MRNA]</scope>
    <source>
        <strain>Berkeley</strain>
    </source>
</reference>
<accession>O46200</accession>
<accession>B7FNL7</accession>
<accession>Q6VBE5</accession>
<accession>Q6VBE6</accession>
<accession>Q6VBE7</accession>
<accession>Q6VBE8</accession>
<accession>Q9VZM3</accession>